<dbReference type="EMBL" id="AJ243395">
    <property type="protein sequence ID" value="CAB76838.1"/>
    <property type="molecule type" value="mRNA"/>
</dbReference>
<dbReference type="EMBL" id="AF378093">
    <property type="protein sequence ID" value="AAK55415.1"/>
    <property type="molecule type" value="mRNA"/>
</dbReference>
<dbReference type="EMBL" id="BC070899">
    <property type="protein sequence ID" value="AAH70899.1"/>
    <property type="molecule type" value="mRNA"/>
</dbReference>
<dbReference type="RefSeq" id="NP_620797.1">
    <property type="nucleotide sequence ID" value="NM_139097.3"/>
</dbReference>
<dbReference type="RefSeq" id="XP_006243164.1">
    <property type="nucleotide sequence ID" value="XM_006243102.3"/>
</dbReference>
<dbReference type="RefSeq" id="XP_006243165.1">
    <property type="nucleotide sequence ID" value="XM_006243103.3"/>
</dbReference>
<dbReference type="RefSeq" id="XP_063120983.1">
    <property type="nucleotide sequence ID" value="XM_063264913.1"/>
</dbReference>
<dbReference type="RefSeq" id="XP_063120984.1">
    <property type="nucleotide sequence ID" value="XM_063264914.1"/>
</dbReference>
<dbReference type="SMR" id="Q9JK00"/>
<dbReference type="BioGRID" id="251452">
    <property type="interactions" value="2"/>
</dbReference>
<dbReference type="CORUM" id="Q9JK00"/>
<dbReference type="FunCoup" id="Q9JK00">
    <property type="interactions" value="1788"/>
</dbReference>
<dbReference type="STRING" id="10116.ENSRNOP00000071448"/>
<dbReference type="TCDB" id="8.A.17.1.2">
    <property type="family name" value="the na(+) channel auxiliary subunit Beta1-Beta4 (sca-Beta) family"/>
</dbReference>
<dbReference type="GlyCosmos" id="Q9JK00">
    <property type="glycosylation" value="4 sites, 9 glycans"/>
</dbReference>
<dbReference type="GlyGen" id="Q9JK00">
    <property type="glycosylation" value="4 sites, 9 N-linked glycans (1 site)"/>
</dbReference>
<dbReference type="iPTMnet" id="Q9JK00"/>
<dbReference type="PhosphoSitePlus" id="Q9JK00"/>
<dbReference type="PaxDb" id="10116-ENSRNOP00000009367"/>
<dbReference type="Ensembl" id="ENSRNOT00000087022.2">
    <property type="protein sequence ID" value="ENSRNOP00000071448.1"/>
    <property type="gene ID" value="ENSRNOG00000057221.2"/>
</dbReference>
<dbReference type="GeneID" id="245956"/>
<dbReference type="KEGG" id="rno:245956"/>
<dbReference type="UCSC" id="RGD:621657">
    <property type="organism name" value="rat"/>
</dbReference>
<dbReference type="AGR" id="RGD:621657"/>
<dbReference type="CTD" id="55800"/>
<dbReference type="RGD" id="621657">
    <property type="gene designation" value="Scn3b"/>
</dbReference>
<dbReference type="eggNOG" id="ENOG502QWH0">
    <property type="taxonomic scope" value="Eukaryota"/>
</dbReference>
<dbReference type="GeneTree" id="ENSGT00390000018560"/>
<dbReference type="HOGENOM" id="CLU_096296_1_0_1"/>
<dbReference type="InParanoid" id="Q9JK00"/>
<dbReference type="OMA" id="QGSHMKL"/>
<dbReference type="OrthoDB" id="9440529at2759"/>
<dbReference type="PhylomeDB" id="Q9JK00"/>
<dbReference type="PRO" id="PR:Q9JK00"/>
<dbReference type="Proteomes" id="UP000002494">
    <property type="component" value="Chromosome 8"/>
</dbReference>
<dbReference type="Bgee" id="ENSRNOG00000057221">
    <property type="expression patterns" value="Expressed in Ammon's horn and 17 other cell types or tissues"/>
</dbReference>
<dbReference type="GO" id="GO:0005829">
    <property type="term" value="C:cytosol"/>
    <property type="evidence" value="ECO:0007669"/>
    <property type="project" value="Ensembl"/>
</dbReference>
<dbReference type="GO" id="GO:0043231">
    <property type="term" value="C:intracellular membrane-bounded organelle"/>
    <property type="evidence" value="ECO:0007669"/>
    <property type="project" value="Ensembl"/>
</dbReference>
<dbReference type="GO" id="GO:0005886">
    <property type="term" value="C:plasma membrane"/>
    <property type="evidence" value="ECO:0000250"/>
    <property type="project" value="UniProtKB"/>
</dbReference>
<dbReference type="GO" id="GO:0001518">
    <property type="term" value="C:voltage-gated sodium channel complex"/>
    <property type="evidence" value="ECO:0000266"/>
    <property type="project" value="RGD"/>
</dbReference>
<dbReference type="GO" id="GO:0030018">
    <property type="term" value="C:Z disc"/>
    <property type="evidence" value="ECO:0000266"/>
    <property type="project" value="RGD"/>
</dbReference>
<dbReference type="GO" id="GO:0019871">
    <property type="term" value="F:sodium channel inhibitor activity"/>
    <property type="evidence" value="ECO:0000318"/>
    <property type="project" value="GO_Central"/>
</dbReference>
<dbReference type="GO" id="GO:0017080">
    <property type="term" value="F:sodium channel regulator activity"/>
    <property type="evidence" value="ECO:0000266"/>
    <property type="project" value="RGD"/>
</dbReference>
<dbReference type="GO" id="GO:0044325">
    <property type="term" value="F:transmembrane transporter binding"/>
    <property type="evidence" value="ECO:0000266"/>
    <property type="project" value="RGD"/>
</dbReference>
<dbReference type="GO" id="GO:0086006">
    <property type="term" value="F:voltage-gated sodium channel activity involved in cardiac muscle cell action potential"/>
    <property type="evidence" value="ECO:0000266"/>
    <property type="project" value="RGD"/>
</dbReference>
<dbReference type="GO" id="GO:0086014">
    <property type="term" value="P:atrial cardiac muscle cell action potential"/>
    <property type="evidence" value="ECO:0000266"/>
    <property type="project" value="RGD"/>
</dbReference>
<dbReference type="GO" id="GO:0061337">
    <property type="term" value="P:cardiac conduction"/>
    <property type="evidence" value="ECO:0000266"/>
    <property type="project" value="RGD"/>
</dbReference>
<dbReference type="GO" id="GO:0086002">
    <property type="term" value="P:cardiac muscle cell action potential involved in contraction"/>
    <property type="evidence" value="ECO:0000266"/>
    <property type="project" value="RGD"/>
</dbReference>
<dbReference type="GO" id="GO:0060048">
    <property type="term" value="P:cardiac muscle contraction"/>
    <property type="evidence" value="ECO:0000266"/>
    <property type="project" value="RGD"/>
</dbReference>
<dbReference type="GO" id="GO:0051899">
    <property type="term" value="P:membrane depolarization"/>
    <property type="evidence" value="ECO:0000266"/>
    <property type="project" value="RGD"/>
</dbReference>
<dbReference type="GO" id="GO:0086010">
    <property type="term" value="P:membrane depolarization during action potential"/>
    <property type="evidence" value="ECO:0000266"/>
    <property type="project" value="RGD"/>
</dbReference>
<dbReference type="GO" id="GO:0086012">
    <property type="term" value="P:membrane depolarization during cardiac muscle cell action potential"/>
    <property type="evidence" value="ECO:0000266"/>
    <property type="project" value="RGD"/>
</dbReference>
<dbReference type="GO" id="GO:0007399">
    <property type="term" value="P:nervous system development"/>
    <property type="evidence" value="ECO:0000270"/>
    <property type="project" value="RGD"/>
</dbReference>
<dbReference type="GO" id="GO:0010460">
    <property type="term" value="P:positive regulation of heart rate"/>
    <property type="evidence" value="ECO:0000266"/>
    <property type="project" value="RGD"/>
</dbReference>
<dbReference type="GO" id="GO:0010765">
    <property type="term" value="P:positive regulation of sodium ion transport"/>
    <property type="evidence" value="ECO:0000266"/>
    <property type="project" value="RGD"/>
</dbReference>
<dbReference type="GO" id="GO:0072659">
    <property type="term" value="P:protein localization to plasma membrane"/>
    <property type="evidence" value="ECO:0000266"/>
    <property type="project" value="RGD"/>
</dbReference>
<dbReference type="GO" id="GO:0060371">
    <property type="term" value="P:regulation of atrial cardiac muscle cell membrane depolarization"/>
    <property type="evidence" value="ECO:0000266"/>
    <property type="project" value="RGD"/>
</dbReference>
<dbReference type="GO" id="GO:0086091">
    <property type="term" value="P:regulation of heart rate by cardiac conduction"/>
    <property type="evidence" value="ECO:0000266"/>
    <property type="project" value="RGD"/>
</dbReference>
<dbReference type="GO" id="GO:0060373">
    <property type="term" value="P:regulation of ventricular cardiac muscle cell membrane depolarization"/>
    <property type="evidence" value="ECO:0000266"/>
    <property type="project" value="RGD"/>
</dbReference>
<dbReference type="GO" id="GO:0086015">
    <property type="term" value="P:SA node cell action potential"/>
    <property type="evidence" value="ECO:0000266"/>
    <property type="project" value="RGD"/>
</dbReference>
<dbReference type="GO" id="GO:0035725">
    <property type="term" value="P:sodium ion transmembrane transport"/>
    <property type="evidence" value="ECO:0000266"/>
    <property type="project" value="RGD"/>
</dbReference>
<dbReference type="GO" id="GO:0006814">
    <property type="term" value="P:sodium ion transport"/>
    <property type="evidence" value="ECO:0000314"/>
    <property type="project" value="RGD"/>
</dbReference>
<dbReference type="GO" id="GO:0086005">
    <property type="term" value="P:ventricular cardiac muscle cell action potential"/>
    <property type="evidence" value="ECO:0000266"/>
    <property type="project" value="RGD"/>
</dbReference>
<dbReference type="FunFam" id="2.60.40.10:FF:000375">
    <property type="entry name" value="Sodium channel beta 1 subunit"/>
    <property type="match status" value="1"/>
</dbReference>
<dbReference type="Gene3D" id="2.60.40.10">
    <property type="entry name" value="Immunoglobulins"/>
    <property type="match status" value="1"/>
</dbReference>
<dbReference type="InterPro" id="IPR007110">
    <property type="entry name" value="Ig-like_dom"/>
</dbReference>
<dbReference type="InterPro" id="IPR036179">
    <property type="entry name" value="Ig-like_dom_sf"/>
</dbReference>
<dbReference type="InterPro" id="IPR013783">
    <property type="entry name" value="Ig-like_fold"/>
</dbReference>
<dbReference type="InterPro" id="IPR003599">
    <property type="entry name" value="Ig_sub"/>
</dbReference>
<dbReference type="InterPro" id="IPR013106">
    <property type="entry name" value="Ig_V-set"/>
</dbReference>
<dbReference type="InterPro" id="IPR027098">
    <property type="entry name" value="Na_channel_b1/b3"/>
</dbReference>
<dbReference type="PANTHER" id="PTHR10546">
    <property type="entry name" value="SODIUM CHANNEL SUBUNIT BETA-1 AND 3"/>
    <property type="match status" value="1"/>
</dbReference>
<dbReference type="PANTHER" id="PTHR10546:SF1">
    <property type="entry name" value="SODIUM CHANNEL SUBUNIT BETA-3"/>
    <property type="match status" value="1"/>
</dbReference>
<dbReference type="Pfam" id="PF07686">
    <property type="entry name" value="V-set"/>
    <property type="match status" value="1"/>
</dbReference>
<dbReference type="SMART" id="SM00409">
    <property type="entry name" value="IG"/>
    <property type="match status" value="1"/>
</dbReference>
<dbReference type="SUPFAM" id="SSF48726">
    <property type="entry name" value="Immunoglobulin"/>
    <property type="match status" value="1"/>
</dbReference>
<dbReference type="PROSITE" id="PS50835">
    <property type="entry name" value="IG_LIKE"/>
    <property type="match status" value="1"/>
</dbReference>
<reference key="1">
    <citation type="journal article" date="2000" name="Proc. Natl. Acad. Sci. U.S.A.">
        <title>Beta3: an additional auxiliary subunit of the voltage-sensitive sodium channel that modulates channel gating with distinct kinetics.</title>
        <authorList>
            <person name="Morgan K."/>
            <person name="Stevens E.B."/>
            <person name="Shaw B."/>
            <person name="Cox P."/>
            <person name="Dixon A.K."/>
            <person name="Lee K."/>
            <person name="Pinnock R.D."/>
            <person name="Highes J."/>
            <person name="Richardson P.J."/>
            <person name="Mizuguchi K."/>
            <person name="Jackson A.P."/>
        </authorList>
    </citation>
    <scope>NUCLEOTIDE SEQUENCE [MRNA]</scope>
    <scope>FUNCTION</scope>
    <source>
        <tissue>Brain</tissue>
    </source>
</reference>
<reference key="2">
    <citation type="journal article" date="2001" name="Mol. Cell. Neurosci.">
        <title>Differential modulation of sodium channel gating and persistent sodium currents by the beta1, beta2, and beta3 subunits.</title>
        <authorList>
            <person name="Qu Y."/>
            <person name="Curtis R."/>
            <person name="Lawson D."/>
            <person name="Gilbride K."/>
            <person name="Ge P."/>
            <person name="DiStefano P.S."/>
            <person name="Silos-Santiago I."/>
            <person name="Catterall W.A."/>
            <person name="Scheuer T."/>
        </authorList>
    </citation>
    <scope>NUCLEOTIDE SEQUENCE [MRNA]</scope>
    <scope>FUNCTION</scope>
    <scope>TISSUE SPECIFICITY</scope>
    <scope>SUBUNIT</scope>
    <source>
        <strain>Sprague-Dawley</strain>
        <tissue>Spinal ganglion</tissue>
    </source>
</reference>
<reference key="3">
    <citation type="journal article" date="2004" name="Genome Res.">
        <title>The status, quality, and expansion of the NIH full-length cDNA project: the Mammalian Gene Collection (MGC).</title>
        <authorList>
            <consortium name="The MGC Project Team"/>
        </authorList>
    </citation>
    <scope>NUCLEOTIDE SEQUENCE [LARGE SCALE MRNA]</scope>
    <source>
        <tissue>Lung</tissue>
    </source>
</reference>
<reference key="4">
    <citation type="journal article" date="2001" name="J. Cell Biol.">
        <title>Sodium channel beta1 and beta3 subunits associate with neurofascin through their extracellular immunoglobulin-like domain.</title>
        <authorList>
            <person name="Ratcliffe C.F."/>
            <person name="Westenbroek R.E."/>
            <person name="Curtis R."/>
            <person name="Catterall W.A."/>
        </authorList>
    </citation>
    <scope>FUNCTION</scope>
    <scope>SUBUNIT</scope>
    <scope>INTERACTION WITH NFASC</scope>
</reference>
<reference key="5">
    <citation type="journal article" date="2004" name="Biochem. Biophys. Res. Commun.">
        <title>Role of auxiliary beta1-, beta2-, and beta3-subunits and their interaction with Na(v)1.8 voltage-gated sodium channel.</title>
        <authorList>
            <person name="Vijayaragavan K."/>
            <person name="Powell A.J."/>
            <person name="Kinghorn I.J."/>
            <person name="Chahine M."/>
        </authorList>
    </citation>
    <scope>FUNCTION</scope>
    <scope>SUBUNIT</scope>
    <scope>INTERACTION WITH SCN10A</scope>
</reference>
<reference key="6">
    <citation type="journal article" date="2004" name="Neuropharmacology">
        <title>Heterologous expression and functional analysis of rat Nav1.8 (SNS) voltage-gated sodium channels in the dorsal root ganglion neuroblastoma cell line ND7-23.</title>
        <authorList>
            <person name="John V.H."/>
            <person name="Main M.J."/>
            <person name="Powell A.J."/>
            <person name="Gladwell Z.M."/>
            <person name="Hick C."/>
            <person name="Sidhu H.S."/>
            <person name="Clare J.J."/>
            <person name="Tate S."/>
            <person name="Trezise D.J."/>
        </authorList>
    </citation>
    <scope>FUNCTION</scope>
</reference>
<proteinExistence type="evidence at protein level"/>
<accession>Q9JK00</accession>
<comment type="function">
    <text evidence="4 5 6 7 8">Regulatory subunit of multiple voltage-gated sodium (Nav) channels directly mediating the depolarization of excitable membranes. Navs, also called VGSCs (voltage-gated sodium channels) or VDSCs (voltage-dependent sodium channels), operate by switching between closed and open conformations depending on the voltage difference across the membrane. In the open conformation they allow Na(+) ions to selectively pass through the pore, along their electrochemical gradient. The influx of Na+ ions provokes membrane depolarization, initiating the propagation of electrical signals throughout cells and tissues (PubMed:10688874, PubMed:11922146). The accessory beta subunits participate in localization and functional modulation of the Nav channels (PubMed:10688874, PubMed:11470829, PubMed:11922146). Voltage-gated sodium channels regulatory subunit that modulates channel gating kinetics (PubMed:10688874, PubMed:11922146). Modulates the activity of SCN2A/Nav1.2, causing a hyperpolarizing shift in the voltage-dependence of inactivation and increasing the fraction of channels operating in the fast gating mode (PubMed:10688874, PubMed:11922146). Also able to induce unique persistent SCN2A/Nav1.2-mediated sodium currents (PubMed:11922146). Could modulate the activity of SCN10A/Nav1.8 (PubMed:14975698, PubMed:15178439).</text>
</comment>
<comment type="subunit">
    <text evidence="1 5 6 8">A voltage-gated sodium (Nav) channel consists of an ion-conducting pore-forming alpha subunit functional on its own that is regulated by one or more beta subunits (PubMed:11922146, PubMed:15178439). Forms homodimers and homotrimers. SCN3B is non-covalently associated with alpha subunits and induces the formation of alpha subunit oligomers, including trimers (PubMed:11922146). Interacts with SCN5A/Nav1.5; regulatory subunit of SCN5A/Nav1.5 (By similarity). Interacts with SCN7A/Nav2.1; probable regulatory subunit of SCN7A/Nav2.1 (By similarity). Interacts with SCN10A; regulatory subunit of SCN10A/Nav1.8. Interacts with NFASC; probably involved in targeting the sodium channels to the nodes of Ranvier (PubMed:11470829).</text>
</comment>
<comment type="subcellular location">
    <subcellularLocation>
        <location evidence="1">Cell membrane</location>
        <topology evidence="1">Single-pass type I membrane protein</topology>
    </subcellularLocation>
</comment>
<comment type="tissue specificity">
    <text evidence="6">Expressed broadly in neurons in the central and peripheral nervous systems, but not in glia and most non-neuronal cells. Weak detection in lung and adrenal gland.</text>
</comment>
<comment type="PTM">
    <text evidence="1">Intramolecular disulfide bonds favor the voltage-gated sodium channel oligomeric complex assembly.</text>
</comment>
<comment type="PTM">
    <text evidence="1">N-glycosylated.</text>
</comment>
<comment type="similarity">
    <text evidence="9">Belongs to the sodium channel auxiliary subunit SCN3B (TC 8.A.17) family.</text>
</comment>
<evidence type="ECO:0000250" key="1">
    <source>
        <dbReference type="UniProtKB" id="Q9NY72"/>
    </source>
</evidence>
<evidence type="ECO:0000255" key="2"/>
<evidence type="ECO:0000255" key="3">
    <source>
        <dbReference type="PROSITE-ProRule" id="PRU00114"/>
    </source>
</evidence>
<evidence type="ECO:0000269" key="4">
    <source>
    </source>
</evidence>
<evidence type="ECO:0000269" key="5">
    <source>
    </source>
</evidence>
<evidence type="ECO:0000269" key="6">
    <source>
    </source>
</evidence>
<evidence type="ECO:0000269" key="7">
    <source>
    </source>
</evidence>
<evidence type="ECO:0000269" key="8">
    <source>
    </source>
</evidence>
<evidence type="ECO:0000305" key="9"/>
<evidence type="ECO:0000312" key="10">
    <source>
        <dbReference type="RGD" id="621657"/>
    </source>
</evidence>
<name>SCN3B_RAT</name>
<gene>
    <name evidence="10" type="primary">Scn3b</name>
</gene>
<sequence>MPAFNRLLPLASLVLIYWVRVCFPVCVEVPSETEAVQGNPMKLRCISCMKREEVEATTVVEWFYRPEGGKDFLIYEYRNGHQEVESPFQGRLQWNGSKDLQDVSITVLNVTLNDSGLYTCNVSREFEFEAHRPFVKTTRLIPLRVTEEAGEDFTSVVSEIMMYILLVFLTLWLFIEMIYCYRKVSKAEEAAQENASDYLAIPSENKENSVVPVEE</sequence>
<feature type="signal peptide" evidence="2">
    <location>
        <begin position="1"/>
        <end position="24"/>
    </location>
</feature>
<feature type="chain" id="PRO_0000014936" description="Sodium channel regulatory subunit beta-3">
    <location>
        <begin position="25"/>
        <end position="215"/>
    </location>
</feature>
<feature type="topological domain" description="Extracellular" evidence="9">
    <location>
        <begin position="25"/>
        <end position="156"/>
    </location>
</feature>
<feature type="transmembrane region" description="Helical" evidence="1">
    <location>
        <begin position="157"/>
        <end position="178"/>
    </location>
</feature>
<feature type="topological domain" description="Cytoplasmic" evidence="9">
    <location>
        <begin position="179"/>
        <end position="215"/>
    </location>
</feature>
<feature type="domain" description="Ig-like C2-type" evidence="2">
    <location>
        <begin position="25"/>
        <end position="138"/>
    </location>
</feature>
<feature type="glycosylation site" description="N-linked (GlcNAc...) asparagine" evidence="2">
    <location>
        <position position="95"/>
    </location>
</feature>
<feature type="glycosylation site" description="N-linked (GlcNAc...) asparagine" evidence="2">
    <location>
        <position position="109"/>
    </location>
</feature>
<feature type="glycosylation site" description="N-linked (GlcNAc...) asparagine" evidence="2">
    <location>
        <position position="113"/>
    </location>
</feature>
<feature type="glycosylation site" description="N-linked (GlcNAc...) asparagine" evidence="2">
    <location>
        <position position="121"/>
    </location>
</feature>
<feature type="disulfide bond" evidence="1 3">
    <location>
        <begin position="26"/>
        <end position="48"/>
    </location>
</feature>
<feature type="disulfide bond" evidence="1 3">
    <location>
        <begin position="45"/>
        <end position="120"/>
    </location>
</feature>
<organism>
    <name type="scientific">Rattus norvegicus</name>
    <name type="common">Rat</name>
    <dbReference type="NCBI Taxonomy" id="10116"/>
    <lineage>
        <taxon>Eukaryota</taxon>
        <taxon>Metazoa</taxon>
        <taxon>Chordata</taxon>
        <taxon>Craniata</taxon>
        <taxon>Vertebrata</taxon>
        <taxon>Euteleostomi</taxon>
        <taxon>Mammalia</taxon>
        <taxon>Eutheria</taxon>
        <taxon>Euarchontoglires</taxon>
        <taxon>Glires</taxon>
        <taxon>Rodentia</taxon>
        <taxon>Myomorpha</taxon>
        <taxon>Muroidea</taxon>
        <taxon>Muridae</taxon>
        <taxon>Murinae</taxon>
        <taxon>Rattus</taxon>
    </lineage>
</organism>
<keyword id="KW-1003">Cell membrane</keyword>
<keyword id="KW-1015">Disulfide bond</keyword>
<keyword id="KW-0325">Glycoprotein</keyword>
<keyword id="KW-0393">Immunoglobulin domain</keyword>
<keyword id="KW-0407">Ion channel</keyword>
<keyword id="KW-0406">Ion transport</keyword>
<keyword id="KW-0472">Membrane</keyword>
<keyword id="KW-1185">Reference proteome</keyword>
<keyword id="KW-0732">Signal</keyword>
<keyword id="KW-0915">Sodium</keyword>
<keyword id="KW-0894">Sodium channel</keyword>
<keyword id="KW-0739">Sodium transport</keyword>
<keyword id="KW-0812">Transmembrane</keyword>
<keyword id="KW-1133">Transmembrane helix</keyword>
<keyword id="KW-0813">Transport</keyword>
<keyword id="KW-0851">Voltage-gated channel</keyword>
<protein>
    <recommendedName>
        <fullName evidence="9">Sodium channel regulatory subunit beta-3</fullName>
    </recommendedName>
</protein>